<comment type="function">
    <text evidence="1">Specifically methylates the adenine in position 37 of tRNA(1)(Val) (anticodon cmo5UAC).</text>
</comment>
<comment type="catalytic activity">
    <reaction evidence="1">
        <text>adenosine(37) in tRNA1(Val) + S-adenosyl-L-methionine = N(6)-methyladenosine(37) in tRNA1(Val) + S-adenosyl-L-homocysteine + H(+)</text>
        <dbReference type="Rhea" id="RHEA:43160"/>
        <dbReference type="Rhea" id="RHEA-COMP:10369"/>
        <dbReference type="Rhea" id="RHEA-COMP:10370"/>
        <dbReference type="ChEBI" id="CHEBI:15378"/>
        <dbReference type="ChEBI" id="CHEBI:57856"/>
        <dbReference type="ChEBI" id="CHEBI:59789"/>
        <dbReference type="ChEBI" id="CHEBI:74411"/>
        <dbReference type="ChEBI" id="CHEBI:74449"/>
        <dbReference type="EC" id="2.1.1.223"/>
    </reaction>
</comment>
<comment type="subcellular location">
    <subcellularLocation>
        <location evidence="1">Cytoplasm</location>
    </subcellularLocation>
</comment>
<comment type="similarity">
    <text evidence="1">Belongs to the methyltransferase superfamily. tRNA (adenine-N(6)-)-methyltransferase family.</text>
</comment>
<feature type="chain" id="PRO_0000387450" description="tRNA1(Val) (adenine(37)-N6)-methyltransferase">
    <location>
        <begin position="1"/>
        <end position="251"/>
    </location>
</feature>
<accession>A1JKJ4</accession>
<proteinExistence type="inferred from homology"/>
<name>TRMN6_YERE8</name>
<dbReference type="EC" id="2.1.1.223" evidence="1"/>
<dbReference type="EMBL" id="AM286415">
    <property type="protein sequence ID" value="CAL11106.1"/>
    <property type="molecule type" value="Genomic_DNA"/>
</dbReference>
<dbReference type="RefSeq" id="YP_001005341.1">
    <property type="nucleotide sequence ID" value="NC_008800.1"/>
</dbReference>
<dbReference type="SMR" id="A1JKJ4"/>
<dbReference type="KEGG" id="yen:YE1008"/>
<dbReference type="PATRIC" id="fig|393305.7.peg.1104"/>
<dbReference type="eggNOG" id="COG4123">
    <property type="taxonomic scope" value="Bacteria"/>
</dbReference>
<dbReference type="HOGENOM" id="CLU_061983_0_0_6"/>
<dbReference type="OrthoDB" id="5383291at2"/>
<dbReference type="Proteomes" id="UP000000642">
    <property type="component" value="Chromosome"/>
</dbReference>
<dbReference type="GO" id="GO:0005737">
    <property type="term" value="C:cytoplasm"/>
    <property type="evidence" value="ECO:0007669"/>
    <property type="project" value="UniProtKB-SubCell"/>
</dbReference>
<dbReference type="GO" id="GO:0003676">
    <property type="term" value="F:nucleic acid binding"/>
    <property type="evidence" value="ECO:0007669"/>
    <property type="project" value="InterPro"/>
</dbReference>
<dbReference type="GO" id="GO:0016430">
    <property type="term" value="F:tRNA (adenine-N6)-methyltransferase activity"/>
    <property type="evidence" value="ECO:0007669"/>
    <property type="project" value="UniProtKB-UniRule"/>
</dbReference>
<dbReference type="GO" id="GO:0032259">
    <property type="term" value="P:methylation"/>
    <property type="evidence" value="ECO:0007669"/>
    <property type="project" value="UniProtKB-KW"/>
</dbReference>
<dbReference type="GO" id="GO:0008033">
    <property type="term" value="P:tRNA processing"/>
    <property type="evidence" value="ECO:0007669"/>
    <property type="project" value="UniProtKB-UniRule"/>
</dbReference>
<dbReference type="CDD" id="cd02440">
    <property type="entry name" value="AdoMet_MTases"/>
    <property type="match status" value="1"/>
</dbReference>
<dbReference type="Gene3D" id="3.40.50.150">
    <property type="entry name" value="Vaccinia Virus protein VP39"/>
    <property type="match status" value="1"/>
</dbReference>
<dbReference type="HAMAP" id="MF_01872">
    <property type="entry name" value="tRNA_methyltr_YfiC"/>
    <property type="match status" value="1"/>
</dbReference>
<dbReference type="InterPro" id="IPR002052">
    <property type="entry name" value="DNA_methylase_N6_adenine_CS"/>
</dbReference>
<dbReference type="InterPro" id="IPR029063">
    <property type="entry name" value="SAM-dependent_MTases_sf"/>
</dbReference>
<dbReference type="InterPro" id="IPR007848">
    <property type="entry name" value="Small_mtfrase_dom"/>
</dbReference>
<dbReference type="InterPro" id="IPR050210">
    <property type="entry name" value="tRNA_Adenine-N(6)_MTase"/>
</dbReference>
<dbReference type="InterPro" id="IPR022882">
    <property type="entry name" value="tRNA_adenine-N6_MeTrfase"/>
</dbReference>
<dbReference type="NCBIfam" id="NF047853">
    <property type="entry name" value="tRm6a37MtseTrmN"/>
    <property type="match status" value="1"/>
</dbReference>
<dbReference type="PANTHER" id="PTHR47739">
    <property type="entry name" value="TRNA1(VAL) (ADENINE(37)-N6)-METHYLTRANSFERASE"/>
    <property type="match status" value="1"/>
</dbReference>
<dbReference type="PANTHER" id="PTHR47739:SF1">
    <property type="entry name" value="TRNA1(VAL) (ADENINE(37)-N6)-METHYLTRANSFERASE"/>
    <property type="match status" value="1"/>
</dbReference>
<dbReference type="Pfam" id="PF05175">
    <property type="entry name" value="MTS"/>
    <property type="match status" value="1"/>
</dbReference>
<dbReference type="PRINTS" id="PR00507">
    <property type="entry name" value="N12N6MTFRASE"/>
</dbReference>
<dbReference type="SUPFAM" id="SSF53335">
    <property type="entry name" value="S-adenosyl-L-methionine-dependent methyltransferases"/>
    <property type="match status" value="1"/>
</dbReference>
<dbReference type="PROSITE" id="PS00092">
    <property type="entry name" value="N6_MTASE"/>
    <property type="match status" value="1"/>
</dbReference>
<evidence type="ECO:0000255" key="1">
    <source>
        <dbReference type="HAMAP-Rule" id="MF_01872"/>
    </source>
</evidence>
<keyword id="KW-0963">Cytoplasm</keyword>
<keyword id="KW-0489">Methyltransferase</keyword>
<keyword id="KW-0949">S-adenosyl-L-methionine</keyword>
<keyword id="KW-0808">Transferase</keyword>
<keyword id="KW-0819">tRNA processing</keyword>
<sequence>MTNVGEQLKKKPMLRGGGFTFKQFFVAHDRCAMKVGTDGVLLGAWVPVEKARKVLDIGCGSGLIALMIAQRSTPEVMIDGVELEPEAAQQASSNAAQSPWAERVHIYQQDVHQFAENHLHQYDLIVSNPPYFAPAVACRDEARDTARYTGSLTHDALLNCAEKLITEDGIFCVVLPHDLGEELSRLAVQQNWFIRCQVDIRDRPGKPLHRILLTLSRQAGETEFQQLDLRQSEGVYSPEFCALISDFYLNY</sequence>
<gene>
    <name type="ordered locus">YE1008</name>
</gene>
<protein>
    <recommendedName>
        <fullName evidence="1">tRNA1(Val) (adenine(37)-N6)-methyltransferase</fullName>
        <ecNumber evidence="1">2.1.1.223</ecNumber>
    </recommendedName>
    <alternativeName>
        <fullName evidence="1">tRNA m6A37 methyltransferase</fullName>
    </alternativeName>
</protein>
<reference key="1">
    <citation type="journal article" date="2006" name="PLoS Genet.">
        <title>The complete genome sequence and comparative genome analysis of the high pathogenicity Yersinia enterocolitica strain 8081.</title>
        <authorList>
            <person name="Thomson N.R."/>
            <person name="Howard S."/>
            <person name="Wren B.W."/>
            <person name="Holden M.T.G."/>
            <person name="Crossman L."/>
            <person name="Challis G.L."/>
            <person name="Churcher C."/>
            <person name="Mungall K."/>
            <person name="Brooks K."/>
            <person name="Chillingworth T."/>
            <person name="Feltwell T."/>
            <person name="Abdellah Z."/>
            <person name="Hauser H."/>
            <person name="Jagels K."/>
            <person name="Maddison M."/>
            <person name="Moule S."/>
            <person name="Sanders M."/>
            <person name="Whitehead S."/>
            <person name="Quail M.A."/>
            <person name="Dougan G."/>
            <person name="Parkhill J."/>
            <person name="Prentice M.B."/>
        </authorList>
    </citation>
    <scope>NUCLEOTIDE SEQUENCE [LARGE SCALE GENOMIC DNA]</scope>
    <source>
        <strain>NCTC 13174 / 8081</strain>
    </source>
</reference>
<organism>
    <name type="scientific">Yersinia enterocolitica serotype O:8 / biotype 1B (strain NCTC 13174 / 8081)</name>
    <dbReference type="NCBI Taxonomy" id="393305"/>
    <lineage>
        <taxon>Bacteria</taxon>
        <taxon>Pseudomonadati</taxon>
        <taxon>Pseudomonadota</taxon>
        <taxon>Gammaproteobacteria</taxon>
        <taxon>Enterobacterales</taxon>
        <taxon>Yersiniaceae</taxon>
        <taxon>Yersinia</taxon>
    </lineage>
</organism>